<keyword id="KW-0963">Cytoplasm</keyword>
<keyword id="KW-0460">Magnesium</keyword>
<keyword id="KW-0479">Metal-binding</keyword>
<keyword id="KW-0548">Nucleotidyltransferase</keyword>
<keyword id="KW-0694">RNA-binding</keyword>
<keyword id="KW-0808">Transferase</keyword>
<name>PNP_KLEP3</name>
<organism>
    <name type="scientific">Klebsiella pneumoniae (strain 342)</name>
    <dbReference type="NCBI Taxonomy" id="507522"/>
    <lineage>
        <taxon>Bacteria</taxon>
        <taxon>Pseudomonadati</taxon>
        <taxon>Pseudomonadota</taxon>
        <taxon>Gammaproteobacteria</taxon>
        <taxon>Enterobacterales</taxon>
        <taxon>Enterobacteriaceae</taxon>
        <taxon>Klebsiella/Raoultella group</taxon>
        <taxon>Klebsiella</taxon>
        <taxon>Klebsiella pneumoniae complex</taxon>
    </lineage>
</organism>
<evidence type="ECO:0000255" key="1">
    <source>
        <dbReference type="HAMAP-Rule" id="MF_01595"/>
    </source>
</evidence>
<evidence type="ECO:0000256" key="2">
    <source>
        <dbReference type="SAM" id="MobiDB-lite"/>
    </source>
</evidence>
<reference key="1">
    <citation type="journal article" date="2008" name="PLoS Genet.">
        <title>Complete genome sequence of the N2-fixing broad host range endophyte Klebsiella pneumoniae 342 and virulence predictions verified in mice.</title>
        <authorList>
            <person name="Fouts D.E."/>
            <person name="Tyler H.L."/>
            <person name="DeBoy R.T."/>
            <person name="Daugherty S."/>
            <person name="Ren Q."/>
            <person name="Badger J.H."/>
            <person name="Durkin A.S."/>
            <person name="Huot H."/>
            <person name="Shrivastava S."/>
            <person name="Kothari S."/>
            <person name="Dodson R.J."/>
            <person name="Mohamoud Y."/>
            <person name="Khouri H."/>
            <person name="Roesch L.F.W."/>
            <person name="Krogfelt K.A."/>
            <person name="Struve C."/>
            <person name="Triplett E.W."/>
            <person name="Methe B.A."/>
        </authorList>
    </citation>
    <scope>NUCLEOTIDE SEQUENCE [LARGE SCALE GENOMIC DNA]</scope>
    <source>
        <strain>342</strain>
    </source>
</reference>
<proteinExistence type="inferred from homology"/>
<accession>B5XSX9</accession>
<sequence length="711" mass="76860">MLNPIVRKFQYGQHTVTLETGMMARQATAAVMVSMDDTAVFVTVVGQKKAKPGQDFFPLTVNYQERTYAAGKIPGGFFRREGRPSEGETLIARLIDRPVRPLFPEGFVNEVQVIATVVSVNPQVNPDIVAMIGASAALSLSGIPFNGPIGAARVGYINDQYVLNPTQEELKSSKLDLVVAGTEAAVLMVESEAELLSEDQMLGAVVFGHEQQQIVIQNINDLVKEAGKPRWDWQPEAVNEALNARVAALAESRLSDAYRITDKQERYAQVDVIKSETIATLVAEDETLDANELGEILHAIEKNVVRSRVLAGEPRIDGREKDMIRGLDVRTGVLPRTHGSALFTRGETQALVTATLGTARDAQNIDELMGERTDSFLFHYNFPPYSVGETGMVGSPKRREIGHGRLAKRGVLAVMPTIDEFPYTVRVVSEITESNGSSSMASVCGASLALMDAGVPVKAAVAGIAMGLVKEGDNFVVLSDILGDEDHLGDMDFKVAGSRDGISALQMDIKIEGITKEIMQVALNQAKGARLHILGVMEQAINAPRGDISEFAPRIHTIKINPDKIKDVIGKGGSVIRALTEETGTTIEIEDDGTVKIAATDGDKAQHAIRRIEEITAEIEVGRIYNGKVTRIVDFGAFVAIGGGKEGLVHISQIADKRVEKVTDYLQMGQEVPVKVLEVDRQGRVRLSIKEATEQTPSAAAPEAPVAEQGE</sequence>
<protein>
    <recommendedName>
        <fullName evidence="1">Polyribonucleotide nucleotidyltransferase</fullName>
        <ecNumber evidence="1">2.7.7.8</ecNumber>
    </recommendedName>
    <alternativeName>
        <fullName evidence="1">Polynucleotide phosphorylase</fullName>
        <shortName evidence="1">PNPase</shortName>
    </alternativeName>
</protein>
<feature type="chain" id="PRO_1000147924" description="Polyribonucleotide nucleotidyltransferase">
    <location>
        <begin position="1"/>
        <end position="711"/>
    </location>
</feature>
<feature type="domain" description="KH" evidence="1">
    <location>
        <begin position="553"/>
        <end position="612"/>
    </location>
</feature>
<feature type="domain" description="S1 motif" evidence="1">
    <location>
        <begin position="622"/>
        <end position="690"/>
    </location>
</feature>
<feature type="region of interest" description="Disordered" evidence="2">
    <location>
        <begin position="691"/>
        <end position="711"/>
    </location>
</feature>
<feature type="compositionally biased region" description="Low complexity" evidence="2">
    <location>
        <begin position="699"/>
        <end position="711"/>
    </location>
</feature>
<feature type="binding site" evidence="1">
    <location>
        <position position="486"/>
    </location>
    <ligand>
        <name>Mg(2+)</name>
        <dbReference type="ChEBI" id="CHEBI:18420"/>
    </ligand>
</feature>
<feature type="binding site" evidence="1">
    <location>
        <position position="492"/>
    </location>
    <ligand>
        <name>Mg(2+)</name>
        <dbReference type="ChEBI" id="CHEBI:18420"/>
    </ligand>
</feature>
<comment type="function">
    <text evidence="1">Involved in mRNA degradation. Catalyzes the phosphorolysis of single-stranded polyribonucleotides processively in the 3'- to 5'-direction.</text>
</comment>
<comment type="catalytic activity">
    <reaction evidence="1">
        <text>RNA(n+1) + phosphate = RNA(n) + a ribonucleoside 5'-diphosphate</text>
        <dbReference type="Rhea" id="RHEA:22096"/>
        <dbReference type="Rhea" id="RHEA-COMP:14527"/>
        <dbReference type="Rhea" id="RHEA-COMP:17342"/>
        <dbReference type="ChEBI" id="CHEBI:43474"/>
        <dbReference type="ChEBI" id="CHEBI:57930"/>
        <dbReference type="ChEBI" id="CHEBI:140395"/>
        <dbReference type="EC" id="2.7.7.8"/>
    </reaction>
</comment>
<comment type="cofactor">
    <cofactor evidence="1">
        <name>Mg(2+)</name>
        <dbReference type="ChEBI" id="CHEBI:18420"/>
    </cofactor>
</comment>
<comment type="subunit">
    <text evidence="1">Component of the RNA degradosome, which is a multiprotein complex involved in RNA processing and mRNA degradation.</text>
</comment>
<comment type="subcellular location">
    <subcellularLocation>
        <location evidence="1">Cytoplasm</location>
    </subcellularLocation>
</comment>
<comment type="similarity">
    <text evidence="1">Belongs to the polyribonucleotide nucleotidyltransferase family.</text>
</comment>
<dbReference type="EC" id="2.7.7.8" evidence="1"/>
<dbReference type="EMBL" id="CP000964">
    <property type="protein sequence ID" value="ACI09874.1"/>
    <property type="molecule type" value="Genomic_DNA"/>
</dbReference>
<dbReference type="SMR" id="B5XSX9"/>
<dbReference type="KEGG" id="kpe:KPK_0551"/>
<dbReference type="HOGENOM" id="CLU_004217_2_2_6"/>
<dbReference type="Proteomes" id="UP000001734">
    <property type="component" value="Chromosome"/>
</dbReference>
<dbReference type="GO" id="GO:0005829">
    <property type="term" value="C:cytosol"/>
    <property type="evidence" value="ECO:0007669"/>
    <property type="project" value="TreeGrafter"/>
</dbReference>
<dbReference type="GO" id="GO:0000175">
    <property type="term" value="F:3'-5'-RNA exonuclease activity"/>
    <property type="evidence" value="ECO:0007669"/>
    <property type="project" value="TreeGrafter"/>
</dbReference>
<dbReference type="GO" id="GO:0000287">
    <property type="term" value="F:magnesium ion binding"/>
    <property type="evidence" value="ECO:0007669"/>
    <property type="project" value="UniProtKB-UniRule"/>
</dbReference>
<dbReference type="GO" id="GO:0004654">
    <property type="term" value="F:polyribonucleotide nucleotidyltransferase activity"/>
    <property type="evidence" value="ECO:0007669"/>
    <property type="project" value="UniProtKB-UniRule"/>
</dbReference>
<dbReference type="GO" id="GO:0003723">
    <property type="term" value="F:RNA binding"/>
    <property type="evidence" value="ECO:0007669"/>
    <property type="project" value="UniProtKB-UniRule"/>
</dbReference>
<dbReference type="GO" id="GO:0006402">
    <property type="term" value="P:mRNA catabolic process"/>
    <property type="evidence" value="ECO:0007669"/>
    <property type="project" value="UniProtKB-UniRule"/>
</dbReference>
<dbReference type="GO" id="GO:0006396">
    <property type="term" value="P:RNA processing"/>
    <property type="evidence" value="ECO:0007669"/>
    <property type="project" value="InterPro"/>
</dbReference>
<dbReference type="CDD" id="cd02393">
    <property type="entry name" value="KH-I_PNPase"/>
    <property type="match status" value="1"/>
</dbReference>
<dbReference type="CDD" id="cd11363">
    <property type="entry name" value="RNase_PH_PNPase_1"/>
    <property type="match status" value="1"/>
</dbReference>
<dbReference type="CDD" id="cd11364">
    <property type="entry name" value="RNase_PH_PNPase_2"/>
    <property type="match status" value="1"/>
</dbReference>
<dbReference type="CDD" id="cd04472">
    <property type="entry name" value="S1_PNPase"/>
    <property type="match status" value="1"/>
</dbReference>
<dbReference type="FunFam" id="2.40.50.140:FF:000023">
    <property type="entry name" value="Polyribonucleotide nucleotidyltransferase"/>
    <property type="match status" value="1"/>
</dbReference>
<dbReference type="FunFam" id="3.30.1370.10:FF:000001">
    <property type="entry name" value="Polyribonucleotide nucleotidyltransferase"/>
    <property type="match status" value="1"/>
</dbReference>
<dbReference type="FunFam" id="3.30.230.70:FF:000001">
    <property type="entry name" value="Polyribonucleotide nucleotidyltransferase"/>
    <property type="match status" value="1"/>
</dbReference>
<dbReference type="FunFam" id="3.30.230.70:FF:000002">
    <property type="entry name" value="Polyribonucleotide nucleotidyltransferase"/>
    <property type="match status" value="1"/>
</dbReference>
<dbReference type="Gene3D" id="3.30.230.70">
    <property type="entry name" value="GHMP Kinase, N-terminal domain"/>
    <property type="match status" value="2"/>
</dbReference>
<dbReference type="Gene3D" id="3.30.1370.10">
    <property type="entry name" value="K Homology domain, type 1"/>
    <property type="match status" value="1"/>
</dbReference>
<dbReference type="Gene3D" id="2.40.50.140">
    <property type="entry name" value="Nucleic acid-binding proteins"/>
    <property type="match status" value="1"/>
</dbReference>
<dbReference type="HAMAP" id="MF_01595">
    <property type="entry name" value="PNPase"/>
    <property type="match status" value="1"/>
</dbReference>
<dbReference type="InterPro" id="IPR001247">
    <property type="entry name" value="ExoRNase_PH_dom1"/>
</dbReference>
<dbReference type="InterPro" id="IPR015847">
    <property type="entry name" value="ExoRNase_PH_dom2"/>
</dbReference>
<dbReference type="InterPro" id="IPR036345">
    <property type="entry name" value="ExoRNase_PH_dom2_sf"/>
</dbReference>
<dbReference type="InterPro" id="IPR004087">
    <property type="entry name" value="KH_dom"/>
</dbReference>
<dbReference type="InterPro" id="IPR004088">
    <property type="entry name" value="KH_dom_type_1"/>
</dbReference>
<dbReference type="InterPro" id="IPR036612">
    <property type="entry name" value="KH_dom_type_1_sf"/>
</dbReference>
<dbReference type="InterPro" id="IPR012340">
    <property type="entry name" value="NA-bd_OB-fold"/>
</dbReference>
<dbReference type="InterPro" id="IPR012162">
    <property type="entry name" value="PNPase"/>
</dbReference>
<dbReference type="InterPro" id="IPR027408">
    <property type="entry name" value="PNPase/RNase_PH_dom_sf"/>
</dbReference>
<dbReference type="InterPro" id="IPR015848">
    <property type="entry name" value="PNPase_PH_RNA-bd_bac/org-type"/>
</dbReference>
<dbReference type="InterPro" id="IPR036456">
    <property type="entry name" value="PNPase_PH_RNA-bd_sf"/>
</dbReference>
<dbReference type="InterPro" id="IPR020568">
    <property type="entry name" value="Ribosomal_Su5_D2-typ_SF"/>
</dbReference>
<dbReference type="InterPro" id="IPR003029">
    <property type="entry name" value="S1_domain"/>
</dbReference>
<dbReference type="NCBIfam" id="TIGR03591">
    <property type="entry name" value="polynuc_phos"/>
    <property type="match status" value="1"/>
</dbReference>
<dbReference type="NCBIfam" id="NF008805">
    <property type="entry name" value="PRK11824.1"/>
    <property type="match status" value="1"/>
</dbReference>
<dbReference type="PANTHER" id="PTHR11252">
    <property type="entry name" value="POLYRIBONUCLEOTIDE NUCLEOTIDYLTRANSFERASE"/>
    <property type="match status" value="1"/>
</dbReference>
<dbReference type="PANTHER" id="PTHR11252:SF0">
    <property type="entry name" value="POLYRIBONUCLEOTIDE NUCLEOTIDYLTRANSFERASE 1, MITOCHONDRIAL"/>
    <property type="match status" value="1"/>
</dbReference>
<dbReference type="Pfam" id="PF00013">
    <property type="entry name" value="KH_1"/>
    <property type="match status" value="1"/>
</dbReference>
<dbReference type="Pfam" id="PF03726">
    <property type="entry name" value="PNPase"/>
    <property type="match status" value="1"/>
</dbReference>
<dbReference type="Pfam" id="PF01138">
    <property type="entry name" value="RNase_PH"/>
    <property type="match status" value="2"/>
</dbReference>
<dbReference type="Pfam" id="PF03725">
    <property type="entry name" value="RNase_PH_C"/>
    <property type="match status" value="2"/>
</dbReference>
<dbReference type="Pfam" id="PF00575">
    <property type="entry name" value="S1"/>
    <property type="match status" value="1"/>
</dbReference>
<dbReference type="PIRSF" id="PIRSF005499">
    <property type="entry name" value="PNPase"/>
    <property type="match status" value="1"/>
</dbReference>
<dbReference type="SMART" id="SM00322">
    <property type="entry name" value="KH"/>
    <property type="match status" value="1"/>
</dbReference>
<dbReference type="SMART" id="SM00316">
    <property type="entry name" value="S1"/>
    <property type="match status" value="1"/>
</dbReference>
<dbReference type="SUPFAM" id="SSF54791">
    <property type="entry name" value="Eukaryotic type KH-domain (KH-domain type I)"/>
    <property type="match status" value="1"/>
</dbReference>
<dbReference type="SUPFAM" id="SSF50249">
    <property type="entry name" value="Nucleic acid-binding proteins"/>
    <property type="match status" value="1"/>
</dbReference>
<dbReference type="SUPFAM" id="SSF46915">
    <property type="entry name" value="Polynucleotide phosphorylase/guanosine pentaphosphate synthase (PNPase/GPSI), domain 3"/>
    <property type="match status" value="1"/>
</dbReference>
<dbReference type="SUPFAM" id="SSF55666">
    <property type="entry name" value="Ribonuclease PH domain 2-like"/>
    <property type="match status" value="2"/>
</dbReference>
<dbReference type="SUPFAM" id="SSF54211">
    <property type="entry name" value="Ribosomal protein S5 domain 2-like"/>
    <property type="match status" value="2"/>
</dbReference>
<dbReference type="PROSITE" id="PS50084">
    <property type="entry name" value="KH_TYPE_1"/>
    <property type="match status" value="1"/>
</dbReference>
<dbReference type="PROSITE" id="PS50126">
    <property type="entry name" value="S1"/>
    <property type="match status" value="1"/>
</dbReference>
<gene>
    <name evidence="1" type="primary">pnp</name>
    <name type="ordered locus">KPK_0551</name>
</gene>